<gene>
    <name evidence="1" type="primary">rplI</name>
    <name type="ordered locus">Aave_1231</name>
</gene>
<accession>A1TLI4</accession>
<feature type="chain" id="PRO_1000014726" description="Large ribosomal subunit protein bL9">
    <location>
        <begin position="1"/>
        <end position="150"/>
    </location>
</feature>
<organism>
    <name type="scientific">Paracidovorax citrulli (strain AAC00-1)</name>
    <name type="common">Acidovorax citrulli</name>
    <dbReference type="NCBI Taxonomy" id="397945"/>
    <lineage>
        <taxon>Bacteria</taxon>
        <taxon>Pseudomonadati</taxon>
        <taxon>Pseudomonadota</taxon>
        <taxon>Betaproteobacteria</taxon>
        <taxon>Burkholderiales</taxon>
        <taxon>Comamonadaceae</taxon>
        <taxon>Paracidovorax</taxon>
    </lineage>
</organism>
<evidence type="ECO:0000255" key="1">
    <source>
        <dbReference type="HAMAP-Rule" id="MF_00503"/>
    </source>
</evidence>
<evidence type="ECO:0000305" key="2"/>
<comment type="function">
    <text evidence="1">Binds to the 23S rRNA.</text>
</comment>
<comment type="similarity">
    <text evidence="1">Belongs to the bacterial ribosomal protein bL9 family.</text>
</comment>
<name>RL9_PARC0</name>
<dbReference type="EMBL" id="CP000512">
    <property type="protein sequence ID" value="ABM31822.1"/>
    <property type="molecule type" value="Genomic_DNA"/>
</dbReference>
<dbReference type="RefSeq" id="WP_011794374.1">
    <property type="nucleotide sequence ID" value="NC_008752.1"/>
</dbReference>
<dbReference type="SMR" id="A1TLI4"/>
<dbReference type="STRING" id="397945.Aave_1231"/>
<dbReference type="GeneID" id="79790892"/>
<dbReference type="KEGG" id="aav:Aave_1231"/>
<dbReference type="eggNOG" id="COG0359">
    <property type="taxonomic scope" value="Bacteria"/>
</dbReference>
<dbReference type="HOGENOM" id="CLU_078938_4_1_4"/>
<dbReference type="OrthoDB" id="9788336at2"/>
<dbReference type="Proteomes" id="UP000002596">
    <property type="component" value="Chromosome"/>
</dbReference>
<dbReference type="GO" id="GO:1990904">
    <property type="term" value="C:ribonucleoprotein complex"/>
    <property type="evidence" value="ECO:0007669"/>
    <property type="project" value="UniProtKB-KW"/>
</dbReference>
<dbReference type="GO" id="GO:0005840">
    <property type="term" value="C:ribosome"/>
    <property type="evidence" value="ECO:0007669"/>
    <property type="project" value="UniProtKB-KW"/>
</dbReference>
<dbReference type="GO" id="GO:0019843">
    <property type="term" value="F:rRNA binding"/>
    <property type="evidence" value="ECO:0007669"/>
    <property type="project" value="UniProtKB-UniRule"/>
</dbReference>
<dbReference type="GO" id="GO:0003735">
    <property type="term" value="F:structural constituent of ribosome"/>
    <property type="evidence" value="ECO:0007669"/>
    <property type="project" value="InterPro"/>
</dbReference>
<dbReference type="GO" id="GO:0006412">
    <property type="term" value="P:translation"/>
    <property type="evidence" value="ECO:0007669"/>
    <property type="project" value="UniProtKB-UniRule"/>
</dbReference>
<dbReference type="Gene3D" id="3.10.430.100">
    <property type="entry name" value="Ribosomal protein L9, C-terminal domain"/>
    <property type="match status" value="1"/>
</dbReference>
<dbReference type="Gene3D" id="3.40.5.10">
    <property type="entry name" value="Ribosomal protein L9, N-terminal domain"/>
    <property type="match status" value="1"/>
</dbReference>
<dbReference type="HAMAP" id="MF_00503">
    <property type="entry name" value="Ribosomal_bL9"/>
    <property type="match status" value="1"/>
</dbReference>
<dbReference type="InterPro" id="IPR000244">
    <property type="entry name" value="Ribosomal_bL9"/>
</dbReference>
<dbReference type="InterPro" id="IPR009027">
    <property type="entry name" value="Ribosomal_bL9/RNase_H1_N"/>
</dbReference>
<dbReference type="InterPro" id="IPR020594">
    <property type="entry name" value="Ribosomal_bL9_bac/chp"/>
</dbReference>
<dbReference type="InterPro" id="IPR020069">
    <property type="entry name" value="Ribosomal_bL9_C"/>
</dbReference>
<dbReference type="InterPro" id="IPR036791">
    <property type="entry name" value="Ribosomal_bL9_C_sf"/>
</dbReference>
<dbReference type="InterPro" id="IPR020070">
    <property type="entry name" value="Ribosomal_bL9_N"/>
</dbReference>
<dbReference type="InterPro" id="IPR036935">
    <property type="entry name" value="Ribosomal_bL9_N_sf"/>
</dbReference>
<dbReference type="NCBIfam" id="TIGR00158">
    <property type="entry name" value="L9"/>
    <property type="match status" value="1"/>
</dbReference>
<dbReference type="PANTHER" id="PTHR21368">
    <property type="entry name" value="50S RIBOSOMAL PROTEIN L9"/>
    <property type="match status" value="1"/>
</dbReference>
<dbReference type="Pfam" id="PF03948">
    <property type="entry name" value="Ribosomal_L9_C"/>
    <property type="match status" value="1"/>
</dbReference>
<dbReference type="Pfam" id="PF01281">
    <property type="entry name" value="Ribosomal_L9_N"/>
    <property type="match status" value="1"/>
</dbReference>
<dbReference type="SUPFAM" id="SSF55658">
    <property type="entry name" value="L9 N-domain-like"/>
    <property type="match status" value="1"/>
</dbReference>
<dbReference type="SUPFAM" id="SSF55653">
    <property type="entry name" value="Ribosomal protein L9 C-domain"/>
    <property type="match status" value="1"/>
</dbReference>
<dbReference type="PROSITE" id="PS00651">
    <property type="entry name" value="RIBOSOMAL_L9"/>
    <property type="match status" value="1"/>
</dbReference>
<proteinExistence type="inferred from homology"/>
<sequence length="150" mass="15945">MQIILLDKVVNLGNLGEIVKVKDGYARNFLIPSGRARRATEANKAEFEAKRAELEKAAAAKLAEAQAQGEKLGGTTVKLTQKAGVDGRLFGSVTNHDIAEELNKQGYKIAKSQVRLPSGPIKTVGDSTVSVALHTDVVVEVTVSVYGETA</sequence>
<protein>
    <recommendedName>
        <fullName evidence="1">Large ribosomal subunit protein bL9</fullName>
    </recommendedName>
    <alternativeName>
        <fullName evidence="2">50S ribosomal protein L9</fullName>
    </alternativeName>
</protein>
<keyword id="KW-0687">Ribonucleoprotein</keyword>
<keyword id="KW-0689">Ribosomal protein</keyword>
<keyword id="KW-0694">RNA-binding</keyword>
<keyword id="KW-0699">rRNA-binding</keyword>
<reference key="1">
    <citation type="submission" date="2006-12" db="EMBL/GenBank/DDBJ databases">
        <title>Complete sequence of Acidovorax avenae subsp. citrulli AAC00-1.</title>
        <authorList>
            <person name="Copeland A."/>
            <person name="Lucas S."/>
            <person name="Lapidus A."/>
            <person name="Barry K."/>
            <person name="Detter J.C."/>
            <person name="Glavina del Rio T."/>
            <person name="Dalin E."/>
            <person name="Tice H."/>
            <person name="Pitluck S."/>
            <person name="Kiss H."/>
            <person name="Brettin T."/>
            <person name="Bruce D."/>
            <person name="Han C."/>
            <person name="Tapia R."/>
            <person name="Gilna P."/>
            <person name="Schmutz J."/>
            <person name="Larimer F."/>
            <person name="Land M."/>
            <person name="Hauser L."/>
            <person name="Kyrpides N."/>
            <person name="Kim E."/>
            <person name="Stahl D."/>
            <person name="Richardson P."/>
        </authorList>
    </citation>
    <scope>NUCLEOTIDE SEQUENCE [LARGE SCALE GENOMIC DNA]</scope>
    <source>
        <strain>AAC00-1</strain>
    </source>
</reference>